<evidence type="ECO:0000250" key="1"/>
<evidence type="ECO:0000255" key="2">
    <source>
        <dbReference type="PROSITE-ProRule" id="PRU00108"/>
    </source>
</evidence>
<evidence type="ECO:0000256" key="3">
    <source>
        <dbReference type="SAM" id="MobiDB-lite"/>
    </source>
</evidence>
<evidence type="ECO:0000305" key="4"/>
<reference key="1">
    <citation type="submission" date="2006-08" db="EMBL/GenBank/DDBJ databases">
        <title>Positive selection in transcription factor genes on the human lineage.</title>
        <authorList>
            <person name="Nickel G.C."/>
            <person name="Tefft D.L."/>
            <person name="Trevarthen K."/>
            <person name="Funt J."/>
            <person name="Adams M.D."/>
        </authorList>
    </citation>
    <scope>NUCLEOTIDE SEQUENCE [GENOMIC DNA]</scope>
</reference>
<proteinExistence type="inferred from homology"/>
<dbReference type="EMBL" id="DQ977221">
    <property type="protein sequence ID" value="ABM54282.1"/>
    <property type="molecule type" value="Genomic_DNA"/>
</dbReference>
<dbReference type="RefSeq" id="XP_003832877.1">
    <property type="nucleotide sequence ID" value="XM_003832829.5"/>
</dbReference>
<dbReference type="BMRB" id="A1YG57"/>
<dbReference type="SMR" id="A1YG57"/>
<dbReference type="STRING" id="9597.ENSPPAP00000035974"/>
<dbReference type="Ensembl" id="ENSPPAT00000058864.1">
    <property type="protein sequence ID" value="ENSPPAP00000035974.1"/>
    <property type="gene ID" value="ENSPPAG00000040766.1"/>
</dbReference>
<dbReference type="GeneID" id="100995285"/>
<dbReference type="KEGG" id="pps:100995285"/>
<dbReference type="CTD" id="145258"/>
<dbReference type="eggNOG" id="KOG0490">
    <property type="taxonomic scope" value="Eukaryota"/>
</dbReference>
<dbReference type="GeneTree" id="ENSGT00940000160635"/>
<dbReference type="OMA" id="QCSCVPA"/>
<dbReference type="OrthoDB" id="15169at9604"/>
<dbReference type="Proteomes" id="UP000240080">
    <property type="component" value="Chromosome 14"/>
</dbReference>
<dbReference type="GO" id="GO:0005634">
    <property type="term" value="C:nucleus"/>
    <property type="evidence" value="ECO:0007669"/>
    <property type="project" value="UniProtKB-SubCell"/>
</dbReference>
<dbReference type="GO" id="GO:0005667">
    <property type="term" value="C:transcription regulator complex"/>
    <property type="evidence" value="ECO:0007669"/>
    <property type="project" value="Ensembl"/>
</dbReference>
<dbReference type="GO" id="GO:0001227">
    <property type="term" value="F:DNA-binding transcription repressor activity, RNA polymerase II-specific"/>
    <property type="evidence" value="ECO:0007669"/>
    <property type="project" value="Ensembl"/>
</dbReference>
<dbReference type="GO" id="GO:0000978">
    <property type="term" value="F:RNA polymerase II cis-regulatory region sequence-specific DNA binding"/>
    <property type="evidence" value="ECO:0007669"/>
    <property type="project" value="Ensembl"/>
</dbReference>
<dbReference type="GO" id="GO:0061629">
    <property type="term" value="F:RNA polymerase II-specific DNA-binding transcription factor binding"/>
    <property type="evidence" value="ECO:0007669"/>
    <property type="project" value="Ensembl"/>
</dbReference>
<dbReference type="GO" id="GO:0021904">
    <property type="term" value="P:dorsal/ventral neural tube patterning"/>
    <property type="evidence" value="ECO:0007669"/>
    <property type="project" value="Ensembl"/>
</dbReference>
<dbReference type="GO" id="GO:0048704">
    <property type="term" value="P:embryonic skeletal system morphogenesis"/>
    <property type="evidence" value="ECO:0007669"/>
    <property type="project" value="Ensembl"/>
</dbReference>
<dbReference type="GO" id="GO:0030900">
    <property type="term" value="P:forebrain development"/>
    <property type="evidence" value="ECO:0007669"/>
    <property type="project" value="Ensembl"/>
</dbReference>
<dbReference type="GO" id="GO:0042474">
    <property type="term" value="P:middle ear morphogenesis"/>
    <property type="evidence" value="ECO:0000250"/>
    <property type="project" value="UniProtKB"/>
</dbReference>
<dbReference type="GO" id="GO:0048644">
    <property type="term" value="P:muscle organ morphogenesis"/>
    <property type="evidence" value="ECO:0007669"/>
    <property type="project" value="Ensembl"/>
</dbReference>
<dbReference type="GO" id="GO:0030178">
    <property type="term" value="P:negative regulation of Wnt signaling pathway"/>
    <property type="evidence" value="ECO:0007669"/>
    <property type="project" value="Ensembl"/>
</dbReference>
<dbReference type="GO" id="GO:0014036">
    <property type="term" value="P:neural crest cell fate specification"/>
    <property type="evidence" value="ECO:0000250"/>
    <property type="project" value="UniProtKB"/>
</dbReference>
<dbReference type="GO" id="GO:0023019">
    <property type="term" value="P:signal transduction involved in regulation of gene expression"/>
    <property type="evidence" value="ECO:0007669"/>
    <property type="project" value="Ensembl"/>
</dbReference>
<dbReference type="GO" id="GO:0016055">
    <property type="term" value="P:Wnt signaling pathway"/>
    <property type="evidence" value="ECO:0007669"/>
    <property type="project" value="Ensembl"/>
</dbReference>
<dbReference type="CDD" id="cd00086">
    <property type="entry name" value="homeodomain"/>
    <property type="match status" value="1"/>
</dbReference>
<dbReference type="FunFam" id="1.10.10.60:FF:000210">
    <property type="entry name" value="homeobox protein goosecoid"/>
    <property type="match status" value="1"/>
</dbReference>
<dbReference type="Gene3D" id="1.10.10.60">
    <property type="entry name" value="Homeodomain-like"/>
    <property type="match status" value="1"/>
</dbReference>
<dbReference type="InterPro" id="IPR051440">
    <property type="entry name" value="Goosecoid-like_HB"/>
</dbReference>
<dbReference type="InterPro" id="IPR001356">
    <property type="entry name" value="HD"/>
</dbReference>
<dbReference type="InterPro" id="IPR017970">
    <property type="entry name" value="Homeobox_CS"/>
</dbReference>
<dbReference type="InterPro" id="IPR009057">
    <property type="entry name" value="Homeodomain-like_sf"/>
</dbReference>
<dbReference type="PANTHER" id="PTHR46643:SF2">
    <property type="entry name" value="HOMEOBOX PROTEIN GOOSECOID"/>
    <property type="match status" value="1"/>
</dbReference>
<dbReference type="PANTHER" id="PTHR46643">
    <property type="entry name" value="HOMEOBOX PROTEIN GOOSECOID-RELATED"/>
    <property type="match status" value="1"/>
</dbReference>
<dbReference type="Pfam" id="PF00046">
    <property type="entry name" value="Homeodomain"/>
    <property type="match status" value="1"/>
</dbReference>
<dbReference type="SMART" id="SM00389">
    <property type="entry name" value="HOX"/>
    <property type="match status" value="1"/>
</dbReference>
<dbReference type="SUPFAM" id="SSF46689">
    <property type="entry name" value="Homeodomain-like"/>
    <property type="match status" value="1"/>
</dbReference>
<dbReference type="PROSITE" id="PS00027">
    <property type="entry name" value="HOMEOBOX_1"/>
    <property type="match status" value="1"/>
</dbReference>
<dbReference type="PROSITE" id="PS50071">
    <property type="entry name" value="HOMEOBOX_2"/>
    <property type="match status" value="1"/>
</dbReference>
<gene>
    <name type="primary">GSC</name>
</gene>
<accession>A1YG57</accession>
<comment type="function">
    <text evidence="1">Regulates chordin (CHRD). May play a role in spatial programing within discrete embryonic fields or lineage compartments during organogenesis. In concert with NKX3-2, plays a role in defining the structural components of the middle ear; required for the development of the entire tympanic ring (By similarity). Probably involved in the regulatory networks that define neural crest cell fate specification and determine mesoderm cell lineages in mammals (By similarity).</text>
</comment>
<comment type="subcellular location">
    <subcellularLocation>
        <location evidence="2">Nucleus</location>
    </subcellularLocation>
</comment>
<comment type="similarity">
    <text evidence="4">Belongs to the paired homeobox family. Bicoid subfamily.</text>
</comment>
<name>GSC_PANPA</name>
<keyword id="KW-0217">Developmental protein</keyword>
<keyword id="KW-0238">DNA-binding</keyword>
<keyword id="KW-0371">Homeobox</keyword>
<keyword id="KW-0539">Nucleus</keyword>
<keyword id="KW-1185">Reference proteome</keyword>
<organism>
    <name type="scientific">Pan paniscus</name>
    <name type="common">Pygmy chimpanzee</name>
    <name type="synonym">Bonobo</name>
    <dbReference type="NCBI Taxonomy" id="9597"/>
    <lineage>
        <taxon>Eukaryota</taxon>
        <taxon>Metazoa</taxon>
        <taxon>Chordata</taxon>
        <taxon>Craniata</taxon>
        <taxon>Vertebrata</taxon>
        <taxon>Euteleostomi</taxon>
        <taxon>Mammalia</taxon>
        <taxon>Eutheria</taxon>
        <taxon>Euarchontoglires</taxon>
        <taxon>Primates</taxon>
        <taxon>Haplorrhini</taxon>
        <taxon>Catarrhini</taxon>
        <taxon>Hominidae</taxon>
        <taxon>Pan</taxon>
    </lineage>
</organism>
<feature type="chain" id="PRO_0000285443" description="Homeobox protein goosecoid">
    <location>
        <begin position="1"/>
        <end position="257"/>
    </location>
</feature>
<feature type="DNA-binding region" description="Homeobox" evidence="2">
    <location>
        <begin position="160"/>
        <end position="219"/>
    </location>
</feature>
<feature type="region of interest" description="Disordered" evidence="3">
    <location>
        <begin position="213"/>
        <end position="257"/>
    </location>
</feature>
<feature type="compositionally biased region" description="Basic and acidic residues" evidence="3">
    <location>
        <begin position="241"/>
        <end position="257"/>
    </location>
</feature>
<sequence>MPASMFSIDNILAARPRCKDSVLPVAPSAAAPVVFPALHGDSLYGASGGASSDYGAFYPRPVAPGGAGLPAAVSGSRLGYNNYFYGQLHVQAAPVGPACCGAVPPLGAQQCSCVPTPPGYEGPGSVLVSPVPHQMLPYMNVGTLSRTELQLLNQLHCRRKRRHRTIFTDEQLEALENLFQETKYPDVGTREQLARKVHLREEKVEVWFKNRRAKWRRQKRSSSEESENAEKWNKTSSSKASPEKREEEGKSDLDSDS</sequence>
<protein>
    <recommendedName>
        <fullName>Homeobox protein goosecoid</fullName>
    </recommendedName>
</protein>